<protein>
    <recommendedName>
        <fullName>Protein P4</fullName>
    </recommendedName>
    <alternativeName>
        <fullName>Protein IV</fullName>
    </alternativeName>
</protein>
<proteinExistence type="evidence at protein level"/>
<gene>
    <name type="primary">IV</name>
</gene>
<comment type="function">
    <text evidence="2">May interact with the viral DNA.</text>
</comment>
<comment type="subcellular location">
    <subcellularLocation>
        <location evidence="4 5">Virion membrane</location>
        <topology evidence="4 5">Single-pass membrane protein</topology>
    </subcellularLocation>
    <text evidence="3">Part of the capsid inner membrane. Located partially in the inner leaflet of the bilayer.</text>
</comment>
<keyword id="KW-1231">Capsid inner membrane protein</keyword>
<keyword id="KW-0903">Direct protein sequencing</keyword>
<keyword id="KW-0472">Membrane</keyword>
<keyword id="KW-1185">Reference proteome</keyword>
<keyword id="KW-0812">Transmembrane</keyword>
<keyword id="KW-1133">Transmembrane helix</keyword>
<keyword id="KW-0946">Virion</keyword>
<evidence type="ECO:0000255" key="1"/>
<evidence type="ECO:0000269" key="2">
    <source>
    </source>
</evidence>
<evidence type="ECO:0000305" key="3"/>
<evidence type="ECO:0000305" key="4">
    <source>
    </source>
</evidence>
<evidence type="ECO:0000305" key="5">
    <source>
    </source>
</evidence>
<reference key="1">
    <citation type="journal article" date="1984" name="Biosci. Rep.">
        <title>Sequence analysis of a PM2-DNA anti-Z-IgG-binding region.</title>
        <authorList>
            <person name="Miller F.D."/>
            <person name="Winkfein R.J."/>
            <person name="Rattner J.B."/>
            <person name="van de Sande J.H."/>
        </authorList>
    </citation>
    <scope>NUCLEOTIDE SEQUENCE [GENOMIC DNA]</scope>
</reference>
<reference key="2">
    <citation type="journal article" date="1999" name="Virology">
        <title>The complete genome sequence of PM2, the first lipid-containing bacterial virus to be isolated.</title>
        <authorList>
            <person name="Maennistoe R.H."/>
            <person name="Kivelae H.M."/>
            <person name="Paulin L."/>
            <person name="Bamford D.H."/>
            <person name="Bamford J.K."/>
        </authorList>
    </citation>
    <scope>NUCLEOTIDE SEQUENCE [GENOMIC DNA]</scope>
</reference>
<reference key="3">
    <citation type="journal article" date="1999" name="Virology">
        <title>Purification and protein composition of PM2, the first lipid-containing bacterial virus to be isolated.</title>
        <authorList>
            <person name="Kivelae H.M."/>
            <person name="Maennistoe R.H."/>
            <person name="Kalkkinen N."/>
            <person name="Bamford D.H."/>
        </authorList>
    </citation>
    <scope>PROTEIN SEQUENCE OF 1-10</scope>
</reference>
<reference key="4">
    <citation type="journal article" date="1980" name="Eur. J. Biochem.">
        <title>Structure and synthesis of a lipid-containing bacteriophage. Studies on the structure of the bacteriophage PM2 nucleocapsid.</title>
        <authorList>
            <person name="Satake H."/>
            <person name="Akutsu H."/>
            <person name="Kania M."/>
            <person name="Franklin R.M."/>
        </authorList>
    </citation>
    <scope>FUNCTION</scope>
    <scope>SUBCELLULAR LOCATION</scope>
</reference>
<reference key="5">
    <citation type="journal article" date="2002" name="J. Virol.">
        <title>Bacteriophage PM2 has a protein capsid surrounding a spherical proteinaceous lipid core.</title>
        <authorList>
            <person name="Kivelae H.M."/>
            <person name="Kalkkinen N."/>
            <person name="Bamford D.H."/>
        </authorList>
    </citation>
    <scope>PROTEIN SEQUENCE OF 1-10</scope>
    <scope>SUBCELLULAR LOCATION</scope>
</reference>
<dbReference type="EMBL" id="M26134">
    <property type="protein sequence ID" value="AAA32194.1"/>
    <property type="molecule type" value="Genomic_DNA"/>
</dbReference>
<dbReference type="EMBL" id="AF155037">
    <property type="protein sequence ID" value="AAD43551.1"/>
    <property type="molecule type" value="Genomic_DNA"/>
</dbReference>
<dbReference type="RefSeq" id="NP_049905.1">
    <property type="nucleotide sequence ID" value="NC_000867.1"/>
</dbReference>
<dbReference type="SMR" id="Q37958"/>
<dbReference type="KEGG" id="vg:1262045"/>
<dbReference type="Proteomes" id="UP000002136">
    <property type="component" value="Genome"/>
</dbReference>
<dbReference type="GO" id="GO:0016020">
    <property type="term" value="C:membrane"/>
    <property type="evidence" value="ECO:0007669"/>
    <property type="project" value="UniProtKB-KW"/>
</dbReference>
<dbReference type="GO" id="GO:0039641">
    <property type="term" value="C:viral inner membrane"/>
    <property type="evidence" value="ECO:0007669"/>
    <property type="project" value="UniProtKB-KW"/>
</dbReference>
<dbReference type="GO" id="GO:0055036">
    <property type="term" value="C:virion membrane"/>
    <property type="evidence" value="ECO:0000314"/>
    <property type="project" value="CACAO"/>
</dbReference>
<organism>
    <name type="scientific">Pseudoalteromonas phage PM2</name>
    <name type="common">Bacteriophage PM2</name>
    <dbReference type="NCBI Taxonomy" id="2905728"/>
    <lineage>
        <taxon>Viruses</taxon>
        <taxon>Varidnaviria</taxon>
        <taxon>Bamfordvirae</taxon>
        <taxon>Preplasmiviricota</taxon>
        <taxon>Tectiliviricetes</taxon>
        <taxon>Vinavirales</taxon>
        <taxon>Corticoviridae</taxon>
        <taxon>Corticovirus</taxon>
        <taxon>Corticovirus PM2</taxon>
    </lineage>
</organism>
<organismHost>
    <name type="scientific">Pseudoalteromonas espejiana</name>
    <dbReference type="NCBI Taxonomy" id="28107"/>
</organismHost>
<feature type="chain" id="PRO_0000339901" description="Protein P4">
    <location>
        <begin position="1"/>
        <end position="40"/>
    </location>
</feature>
<feature type="transmembrane region" description="Helical" evidence="1">
    <location>
        <begin position="10"/>
        <end position="29"/>
    </location>
</feature>
<sequence>MQKPSGKGLKYFAYGVAISAAGAILAEYVRDWMRKPKAKS</sequence>
<name>P4_BPPM2</name>
<accession>Q37958</accession>